<sequence>MSGSTGERSFADIITSIRYWVIHSITIPSLFIAGWLFVSTGLAYDVFGSPRPNEYFTESRQGIPLITGRFDSLEQLDEFSRSF</sequence>
<geneLocation type="chloroplast"/>
<reference key="1">
    <citation type="journal article" date="2002" name="Mol. Biol. Evol.">
        <title>The plastid chromosome of Atropa belladonna and its comparison with that of Nicotiana tabacum: the role of RNA editing in generating divergence in the process of plant speciation.</title>
        <authorList>
            <person name="Schmitz-Linneweber C."/>
            <person name="Regel R."/>
            <person name="Du T.G."/>
            <person name="Hupfer H."/>
            <person name="Herrmann R.G."/>
            <person name="Maier R.M."/>
        </authorList>
    </citation>
    <scope>NUCLEOTIDE SEQUENCE [LARGE SCALE GENOMIC DNA]</scope>
    <source>
        <strain>cv. Ab5p(kan)</strain>
    </source>
</reference>
<keyword id="KW-0150">Chloroplast</keyword>
<keyword id="KW-0249">Electron transport</keyword>
<keyword id="KW-0349">Heme</keyword>
<keyword id="KW-0408">Iron</keyword>
<keyword id="KW-0472">Membrane</keyword>
<keyword id="KW-0479">Metal-binding</keyword>
<keyword id="KW-0602">Photosynthesis</keyword>
<keyword id="KW-0604">Photosystem II</keyword>
<keyword id="KW-0934">Plastid</keyword>
<keyword id="KW-0793">Thylakoid</keyword>
<keyword id="KW-0812">Transmembrane</keyword>
<keyword id="KW-1133">Transmembrane helix</keyword>
<keyword id="KW-0813">Transport</keyword>
<name>PSBE_ATRBE</name>
<accession>P59702</accession>
<comment type="function">
    <text evidence="1">This b-type cytochrome is tightly associated with the reaction center of photosystem II (PSII). PSII is a light-driven water:plastoquinone oxidoreductase that uses light energy to abstract electrons from H(2)O, generating O(2) and a proton gradient subsequently used for ATP formation. It consists of a core antenna complex that captures photons, and an electron transfer chain that converts photonic excitation into a charge separation.</text>
</comment>
<comment type="cofactor">
    <cofactor evidence="1">
        <name>heme b</name>
        <dbReference type="ChEBI" id="CHEBI:60344"/>
    </cofactor>
    <text evidence="1">With its partner (PsbF) binds heme. PSII binds additional chlorophylls, carotenoids and specific lipids.</text>
</comment>
<comment type="subunit">
    <text evidence="1">Heterodimer of an alpha subunit and a beta subunit. PSII is composed of 1 copy each of membrane proteins PsbA, PsbB, PsbC, PsbD, PsbE, PsbF, PsbH, PsbI, PsbJ, PsbK, PsbL, PsbM, PsbT, PsbX, PsbY, PsbZ, Psb30/Ycf12, at least 3 peripheral proteins of the oxygen-evolving complex and a large number of cofactors. It forms dimeric complexes.</text>
</comment>
<comment type="subcellular location">
    <subcellularLocation>
        <location evidence="1">Plastid</location>
        <location evidence="1">Chloroplast thylakoid membrane</location>
        <topology evidence="1">Single-pass membrane protein</topology>
    </subcellularLocation>
</comment>
<comment type="similarity">
    <text evidence="1">Belongs to the PsbE/PsbF family.</text>
</comment>
<evidence type="ECO:0000255" key="1">
    <source>
        <dbReference type="HAMAP-Rule" id="MF_00642"/>
    </source>
</evidence>
<feature type="chain" id="PRO_0000200299" description="Cytochrome b559 subunit alpha">
    <location>
        <begin position="1"/>
        <end position="83"/>
    </location>
</feature>
<feature type="transmembrane region" description="Helical" evidence="1">
    <location>
        <begin position="21"/>
        <end position="35"/>
    </location>
</feature>
<feature type="binding site" description="axial binding residue" evidence="1">
    <location>
        <position position="23"/>
    </location>
    <ligand>
        <name>heme</name>
        <dbReference type="ChEBI" id="CHEBI:30413"/>
        <note>ligand shared with beta subunit</note>
    </ligand>
    <ligandPart>
        <name>Fe</name>
        <dbReference type="ChEBI" id="CHEBI:18248"/>
    </ligandPart>
</feature>
<gene>
    <name evidence="1" type="primary">psbE</name>
</gene>
<dbReference type="EMBL" id="AJ316582">
    <property type="protein sequence ID" value="CAC88061.1"/>
    <property type="molecule type" value="Genomic_DNA"/>
</dbReference>
<dbReference type="RefSeq" id="NP_783249.1">
    <property type="nucleotide sequence ID" value="NC_004561.1"/>
</dbReference>
<dbReference type="SMR" id="P59702"/>
<dbReference type="GeneID" id="806444"/>
<dbReference type="GO" id="GO:0009535">
    <property type="term" value="C:chloroplast thylakoid membrane"/>
    <property type="evidence" value="ECO:0007669"/>
    <property type="project" value="UniProtKB-SubCell"/>
</dbReference>
<dbReference type="GO" id="GO:0009539">
    <property type="term" value="C:photosystem II reaction center"/>
    <property type="evidence" value="ECO:0007669"/>
    <property type="project" value="InterPro"/>
</dbReference>
<dbReference type="GO" id="GO:0009055">
    <property type="term" value="F:electron transfer activity"/>
    <property type="evidence" value="ECO:0007669"/>
    <property type="project" value="UniProtKB-UniRule"/>
</dbReference>
<dbReference type="GO" id="GO:0020037">
    <property type="term" value="F:heme binding"/>
    <property type="evidence" value="ECO:0007669"/>
    <property type="project" value="InterPro"/>
</dbReference>
<dbReference type="GO" id="GO:0005506">
    <property type="term" value="F:iron ion binding"/>
    <property type="evidence" value="ECO:0007669"/>
    <property type="project" value="UniProtKB-UniRule"/>
</dbReference>
<dbReference type="GO" id="GO:0009767">
    <property type="term" value="P:photosynthetic electron transport chain"/>
    <property type="evidence" value="ECO:0007669"/>
    <property type="project" value="InterPro"/>
</dbReference>
<dbReference type="Gene3D" id="1.20.5.860">
    <property type="entry name" value="Photosystem II cytochrome b559, alpha subunit"/>
    <property type="match status" value="1"/>
</dbReference>
<dbReference type="HAMAP" id="MF_00642">
    <property type="entry name" value="PSII_PsbE"/>
    <property type="match status" value="1"/>
</dbReference>
<dbReference type="InterPro" id="IPR006217">
    <property type="entry name" value="PSII_cyt_b559_asu"/>
</dbReference>
<dbReference type="InterPro" id="IPR037025">
    <property type="entry name" value="PSII_cyt_b559_asu_sf"/>
</dbReference>
<dbReference type="InterPro" id="IPR006216">
    <property type="entry name" value="PSII_cyt_b559_CS"/>
</dbReference>
<dbReference type="InterPro" id="IPR013081">
    <property type="entry name" value="PSII_cyt_b559_N"/>
</dbReference>
<dbReference type="InterPro" id="IPR013082">
    <property type="entry name" value="PSII_cytb559_asu_lum"/>
</dbReference>
<dbReference type="NCBIfam" id="TIGR01332">
    <property type="entry name" value="cyt_b559_alpha"/>
    <property type="match status" value="1"/>
</dbReference>
<dbReference type="PANTHER" id="PTHR33391">
    <property type="entry name" value="CYTOCHROME B559 SUBUNIT BETA-RELATED"/>
    <property type="match status" value="1"/>
</dbReference>
<dbReference type="PANTHER" id="PTHR33391:SF9">
    <property type="entry name" value="CYTOCHROME B559 SUBUNIT BETA-RELATED"/>
    <property type="match status" value="1"/>
</dbReference>
<dbReference type="Pfam" id="PF00283">
    <property type="entry name" value="Cytochrom_B559"/>
    <property type="match status" value="1"/>
</dbReference>
<dbReference type="Pfam" id="PF00284">
    <property type="entry name" value="Cytochrom_B559a"/>
    <property type="match status" value="1"/>
</dbReference>
<dbReference type="PIRSF" id="PIRSF000036">
    <property type="entry name" value="PsbE"/>
    <property type="match status" value="1"/>
</dbReference>
<dbReference type="SUPFAM" id="SSF161045">
    <property type="entry name" value="Cytochrome b559 subunits"/>
    <property type="match status" value="1"/>
</dbReference>
<dbReference type="PROSITE" id="PS00537">
    <property type="entry name" value="CYTOCHROME_B559"/>
    <property type="match status" value="1"/>
</dbReference>
<proteinExistence type="inferred from homology"/>
<protein>
    <recommendedName>
        <fullName evidence="1">Cytochrome b559 subunit alpha</fullName>
    </recommendedName>
    <alternativeName>
        <fullName evidence="1">PSII reaction center subunit V</fullName>
    </alternativeName>
</protein>
<organism>
    <name type="scientific">Atropa belladonna</name>
    <name type="common">Belladonna</name>
    <name type="synonym">Deadly nightshade</name>
    <dbReference type="NCBI Taxonomy" id="33113"/>
    <lineage>
        <taxon>Eukaryota</taxon>
        <taxon>Viridiplantae</taxon>
        <taxon>Streptophyta</taxon>
        <taxon>Embryophyta</taxon>
        <taxon>Tracheophyta</taxon>
        <taxon>Spermatophyta</taxon>
        <taxon>Magnoliopsida</taxon>
        <taxon>eudicotyledons</taxon>
        <taxon>Gunneridae</taxon>
        <taxon>Pentapetalae</taxon>
        <taxon>asterids</taxon>
        <taxon>lamiids</taxon>
        <taxon>Solanales</taxon>
        <taxon>Solanaceae</taxon>
        <taxon>Solanoideae</taxon>
        <taxon>Hyoscyameae</taxon>
        <taxon>Atropa</taxon>
    </lineage>
</organism>